<comment type="catalytic activity">
    <reaction evidence="1">
        <text>2-formamido-N(1)-(5-O-phospho-beta-D-ribosyl)acetamidine + ATP = 5-amino-1-(5-phospho-beta-D-ribosyl)imidazole + ADP + phosphate + H(+)</text>
        <dbReference type="Rhea" id="RHEA:23032"/>
        <dbReference type="ChEBI" id="CHEBI:15378"/>
        <dbReference type="ChEBI" id="CHEBI:30616"/>
        <dbReference type="ChEBI" id="CHEBI:43474"/>
        <dbReference type="ChEBI" id="CHEBI:137981"/>
        <dbReference type="ChEBI" id="CHEBI:147287"/>
        <dbReference type="ChEBI" id="CHEBI:456216"/>
        <dbReference type="EC" id="6.3.3.1"/>
    </reaction>
</comment>
<comment type="pathway">
    <text evidence="1">Purine metabolism; IMP biosynthesis via de novo pathway; 5-amino-1-(5-phospho-D-ribosyl)imidazole from N(2)-formyl-N(1)-(5-phospho-D-ribosyl)glycinamide: step 2/2.</text>
</comment>
<comment type="subcellular location">
    <subcellularLocation>
        <location evidence="1">Cytoplasm</location>
    </subcellularLocation>
</comment>
<comment type="similarity">
    <text evidence="1">Belongs to the AIR synthase family.</text>
</comment>
<name>PUR5_CERSK</name>
<feature type="chain" id="PRO_1000148292" description="Phosphoribosylformylglycinamidine cyclo-ligase">
    <location>
        <begin position="1"/>
        <end position="348"/>
    </location>
</feature>
<dbReference type="EC" id="6.3.3.1" evidence="1"/>
<dbReference type="EMBL" id="CP001150">
    <property type="protein sequence ID" value="ACM00128.1"/>
    <property type="molecule type" value="Genomic_DNA"/>
</dbReference>
<dbReference type="RefSeq" id="WP_012643597.1">
    <property type="nucleotide sequence ID" value="NC_011963.1"/>
</dbReference>
<dbReference type="SMR" id="B9KMR6"/>
<dbReference type="GeneID" id="67445748"/>
<dbReference type="KEGG" id="rsk:RSKD131_0268"/>
<dbReference type="HOGENOM" id="CLU_047116_0_0_5"/>
<dbReference type="UniPathway" id="UPA00074">
    <property type="reaction ID" value="UER00129"/>
</dbReference>
<dbReference type="GO" id="GO:0005829">
    <property type="term" value="C:cytosol"/>
    <property type="evidence" value="ECO:0007669"/>
    <property type="project" value="TreeGrafter"/>
</dbReference>
<dbReference type="GO" id="GO:0005524">
    <property type="term" value="F:ATP binding"/>
    <property type="evidence" value="ECO:0007669"/>
    <property type="project" value="UniProtKB-KW"/>
</dbReference>
<dbReference type="GO" id="GO:0004637">
    <property type="term" value="F:phosphoribosylamine-glycine ligase activity"/>
    <property type="evidence" value="ECO:0007669"/>
    <property type="project" value="TreeGrafter"/>
</dbReference>
<dbReference type="GO" id="GO:0004641">
    <property type="term" value="F:phosphoribosylformylglycinamidine cyclo-ligase activity"/>
    <property type="evidence" value="ECO:0007669"/>
    <property type="project" value="UniProtKB-UniRule"/>
</dbReference>
<dbReference type="GO" id="GO:0006189">
    <property type="term" value="P:'de novo' IMP biosynthetic process"/>
    <property type="evidence" value="ECO:0007669"/>
    <property type="project" value="UniProtKB-UniRule"/>
</dbReference>
<dbReference type="GO" id="GO:0046084">
    <property type="term" value="P:adenine biosynthetic process"/>
    <property type="evidence" value="ECO:0007669"/>
    <property type="project" value="TreeGrafter"/>
</dbReference>
<dbReference type="CDD" id="cd02196">
    <property type="entry name" value="PurM"/>
    <property type="match status" value="1"/>
</dbReference>
<dbReference type="FunFam" id="3.30.1330.10:FF:000001">
    <property type="entry name" value="Phosphoribosylformylglycinamidine cyclo-ligase"/>
    <property type="match status" value="1"/>
</dbReference>
<dbReference type="FunFam" id="3.90.650.10:FF:000011">
    <property type="entry name" value="Phosphoribosylformylglycinamidine cyclo-ligase"/>
    <property type="match status" value="1"/>
</dbReference>
<dbReference type="Gene3D" id="3.90.650.10">
    <property type="entry name" value="PurM-like C-terminal domain"/>
    <property type="match status" value="1"/>
</dbReference>
<dbReference type="Gene3D" id="3.30.1330.10">
    <property type="entry name" value="PurM-like, N-terminal domain"/>
    <property type="match status" value="1"/>
</dbReference>
<dbReference type="HAMAP" id="MF_00741">
    <property type="entry name" value="AIRS"/>
    <property type="match status" value="1"/>
</dbReference>
<dbReference type="InterPro" id="IPR010918">
    <property type="entry name" value="PurM-like_C_dom"/>
</dbReference>
<dbReference type="InterPro" id="IPR036676">
    <property type="entry name" value="PurM-like_C_sf"/>
</dbReference>
<dbReference type="InterPro" id="IPR016188">
    <property type="entry name" value="PurM-like_N"/>
</dbReference>
<dbReference type="InterPro" id="IPR036921">
    <property type="entry name" value="PurM-like_N_sf"/>
</dbReference>
<dbReference type="InterPro" id="IPR004733">
    <property type="entry name" value="PurM_cligase"/>
</dbReference>
<dbReference type="NCBIfam" id="TIGR00878">
    <property type="entry name" value="purM"/>
    <property type="match status" value="1"/>
</dbReference>
<dbReference type="PANTHER" id="PTHR10520:SF12">
    <property type="entry name" value="TRIFUNCTIONAL PURINE BIOSYNTHETIC PROTEIN ADENOSINE-3"/>
    <property type="match status" value="1"/>
</dbReference>
<dbReference type="PANTHER" id="PTHR10520">
    <property type="entry name" value="TRIFUNCTIONAL PURINE BIOSYNTHETIC PROTEIN ADENOSINE-3-RELATED"/>
    <property type="match status" value="1"/>
</dbReference>
<dbReference type="Pfam" id="PF00586">
    <property type="entry name" value="AIRS"/>
    <property type="match status" value="1"/>
</dbReference>
<dbReference type="Pfam" id="PF02769">
    <property type="entry name" value="AIRS_C"/>
    <property type="match status" value="1"/>
</dbReference>
<dbReference type="SUPFAM" id="SSF56042">
    <property type="entry name" value="PurM C-terminal domain-like"/>
    <property type="match status" value="1"/>
</dbReference>
<dbReference type="SUPFAM" id="SSF55326">
    <property type="entry name" value="PurM N-terminal domain-like"/>
    <property type="match status" value="1"/>
</dbReference>
<sequence>MAEQQKGLTYADAGVDIDAGNALVERIKPAAKRTARPGTVSGLGGFGALFDLKAAGYHDPVLVAATDGVGTKLRIAIDTGEVDTIGIDLVAMCVNDLVCQGAEPLFFLDYFATGKLEVAQAARIIEGIAEGCAASGCALIGGETAEMPGMYHKGDFDLAGFAVGAMERGADLPQGVAEGDVLLGLGSNGVHSNGYSFVRKVVELSGLGWDAPAPFGGDSLGRALLAPTRLYVKQALAAVRAGGVHALAHITGGGLTENLPRVLPEGLGARIDLSAWELPSVFRWLAETASMAEPELLKTFNCGIGMIVVVAADRADEIAALLAAEGETVTRIGEVIAGEGVSYDGRLL</sequence>
<reference key="1">
    <citation type="journal article" date="2009" name="J. Bacteriol.">
        <title>Complete genome sequence of Rhodobacter sphaeroides KD131.</title>
        <authorList>
            <person name="Lim S.-K."/>
            <person name="Kim S.J."/>
            <person name="Cha S.H."/>
            <person name="Oh Y.-K."/>
            <person name="Rhee H.-J."/>
            <person name="Kim M.-S."/>
            <person name="Lee J.K."/>
        </authorList>
    </citation>
    <scope>NUCLEOTIDE SEQUENCE [LARGE SCALE GENOMIC DNA]</scope>
    <source>
        <strain>KD131 / KCTC 12085</strain>
    </source>
</reference>
<organism>
    <name type="scientific">Cereibacter sphaeroides (strain KD131 / KCTC 12085)</name>
    <name type="common">Rhodobacter sphaeroides</name>
    <dbReference type="NCBI Taxonomy" id="557760"/>
    <lineage>
        <taxon>Bacteria</taxon>
        <taxon>Pseudomonadati</taxon>
        <taxon>Pseudomonadota</taxon>
        <taxon>Alphaproteobacteria</taxon>
        <taxon>Rhodobacterales</taxon>
        <taxon>Paracoccaceae</taxon>
        <taxon>Cereibacter</taxon>
    </lineage>
</organism>
<gene>
    <name evidence="1" type="primary">purM</name>
    <name type="ordered locus">RSKD131_0268</name>
</gene>
<protein>
    <recommendedName>
        <fullName evidence="1">Phosphoribosylformylglycinamidine cyclo-ligase</fullName>
        <ecNumber evidence="1">6.3.3.1</ecNumber>
    </recommendedName>
    <alternativeName>
        <fullName evidence="1">AIR synthase</fullName>
    </alternativeName>
    <alternativeName>
        <fullName evidence="1">AIRS</fullName>
    </alternativeName>
    <alternativeName>
        <fullName evidence="1">Phosphoribosyl-aminoimidazole synthetase</fullName>
    </alternativeName>
</protein>
<proteinExistence type="inferred from homology"/>
<keyword id="KW-0067">ATP-binding</keyword>
<keyword id="KW-0963">Cytoplasm</keyword>
<keyword id="KW-0436">Ligase</keyword>
<keyword id="KW-0547">Nucleotide-binding</keyword>
<keyword id="KW-0658">Purine biosynthesis</keyword>
<accession>B9KMR6</accession>
<evidence type="ECO:0000255" key="1">
    <source>
        <dbReference type="HAMAP-Rule" id="MF_00741"/>
    </source>
</evidence>